<feature type="chain" id="PRO_1000122427" description="Homoserine kinase">
    <location>
        <begin position="1"/>
        <end position="309"/>
    </location>
</feature>
<feature type="binding site" evidence="1">
    <location>
        <begin position="91"/>
        <end position="101"/>
    </location>
    <ligand>
        <name>ATP</name>
        <dbReference type="ChEBI" id="CHEBI:30616"/>
    </ligand>
</feature>
<keyword id="KW-0028">Amino-acid biosynthesis</keyword>
<keyword id="KW-0067">ATP-binding</keyword>
<keyword id="KW-0963">Cytoplasm</keyword>
<keyword id="KW-0418">Kinase</keyword>
<keyword id="KW-0547">Nucleotide-binding</keyword>
<keyword id="KW-0791">Threonine biosynthesis</keyword>
<keyword id="KW-0808">Transferase</keyword>
<comment type="function">
    <text evidence="1">Catalyzes the ATP-dependent phosphorylation of L-homoserine to L-homoserine phosphate.</text>
</comment>
<comment type="catalytic activity">
    <reaction evidence="1">
        <text>L-homoserine + ATP = O-phospho-L-homoserine + ADP + H(+)</text>
        <dbReference type="Rhea" id="RHEA:13985"/>
        <dbReference type="ChEBI" id="CHEBI:15378"/>
        <dbReference type="ChEBI" id="CHEBI:30616"/>
        <dbReference type="ChEBI" id="CHEBI:57476"/>
        <dbReference type="ChEBI" id="CHEBI:57590"/>
        <dbReference type="ChEBI" id="CHEBI:456216"/>
        <dbReference type="EC" id="2.7.1.39"/>
    </reaction>
</comment>
<comment type="pathway">
    <text evidence="1">Amino-acid biosynthesis; L-threonine biosynthesis; L-threonine from L-aspartate: step 4/5.</text>
</comment>
<comment type="subcellular location">
    <subcellularLocation>
        <location evidence="1">Cytoplasm</location>
    </subcellularLocation>
</comment>
<comment type="similarity">
    <text evidence="1">Belongs to the GHMP kinase family. Homoserine kinase subfamily.</text>
</comment>
<proteinExistence type="inferred from homology"/>
<sequence>MVKVYAPASSANMSVGFDVLGAAVTPVDGTLLGDNVTVEAAEQFSLHNLGRFASKLPTAPQENIVYQCWESFCQEIGKTVPVTMTLEKNMPIGSGLGSSACSVVAALVAMNEFCGKPLNETRMLALMGEMEGRISGSIHYDNVAPCYLGGMQLMIEENGIISQQVPGFDEWLWVLAYPGIKVSTAEARAILPAQYRRQDCIAHGRHLAGFIHACYTRQPQLAAKLMKDVIAEPYRTKLLPGFSEARQATMEIGAQACGISGSGPTLFALCDKPDTAQRVADWLGAHYLQNQEGFVHICRLDTAGARVVG</sequence>
<reference key="1">
    <citation type="journal article" date="2008" name="PLoS Genet.">
        <title>Complete genome sequence of the N2-fixing broad host range endophyte Klebsiella pneumoniae 342 and virulence predictions verified in mice.</title>
        <authorList>
            <person name="Fouts D.E."/>
            <person name="Tyler H.L."/>
            <person name="DeBoy R.T."/>
            <person name="Daugherty S."/>
            <person name="Ren Q."/>
            <person name="Badger J.H."/>
            <person name="Durkin A.S."/>
            <person name="Huot H."/>
            <person name="Shrivastava S."/>
            <person name="Kothari S."/>
            <person name="Dodson R.J."/>
            <person name="Mohamoud Y."/>
            <person name="Khouri H."/>
            <person name="Roesch L.F.W."/>
            <person name="Krogfelt K.A."/>
            <person name="Struve C."/>
            <person name="Triplett E.W."/>
            <person name="Methe B.A."/>
        </authorList>
    </citation>
    <scope>NUCLEOTIDE SEQUENCE [LARGE SCALE GENOMIC DNA]</scope>
    <source>
        <strain>342</strain>
    </source>
</reference>
<evidence type="ECO:0000255" key="1">
    <source>
        <dbReference type="HAMAP-Rule" id="MF_00384"/>
    </source>
</evidence>
<dbReference type="EC" id="2.7.1.39" evidence="1"/>
<dbReference type="EMBL" id="CP000964">
    <property type="protein sequence ID" value="ACI09694.1"/>
    <property type="molecule type" value="Genomic_DNA"/>
</dbReference>
<dbReference type="SMR" id="B5Y254"/>
<dbReference type="KEGG" id="kpe:KPK_4754"/>
<dbReference type="HOGENOM" id="CLU_041243_1_1_6"/>
<dbReference type="UniPathway" id="UPA00050">
    <property type="reaction ID" value="UER00064"/>
</dbReference>
<dbReference type="Proteomes" id="UP000001734">
    <property type="component" value="Chromosome"/>
</dbReference>
<dbReference type="GO" id="GO:0005737">
    <property type="term" value="C:cytoplasm"/>
    <property type="evidence" value="ECO:0007669"/>
    <property type="project" value="UniProtKB-SubCell"/>
</dbReference>
<dbReference type="GO" id="GO:0005524">
    <property type="term" value="F:ATP binding"/>
    <property type="evidence" value="ECO:0007669"/>
    <property type="project" value="UniProtKB-UniRule"/>
</dbReference>
<dbReference type="GO" id="GO:0004413">
    <property type="term" value="F:homoserine kinase activity"/>
    <property type="evidence" value="ECO:0007669"/>
    <property type="project" value="UniProtKB-UniRule"/>
</dbReference>
<dbReference type="GO" id="GO:0009088">
    <property type="term" value="P:threonine biosynthetic process"/>
    <property type="evidence" value="ECO:0007669"/>
    <property type="project" value="UniProtKB-UniRule"/>
</dbReference>
<dbReference type="FunFam" id="3.30.230.10:FF:000020">
    <property type="entry name" value="Homoserine kinase"/>
    <property type="match status" value="1"/>
</dbReference>
<dbReference type="FunFam" id="3.30.70.890:FF:000002">
    <property type="entry name" value="Homoserine kinase"/>
    <property type="match status" value="1"/>
</dbReference>
<dbReference type="Gene3D" id="3.30.230.10">
    <property type="match status" value="1"/>
</dbReference>
<dbReference type="Gene3D" id="3.30.70.890">
    <property type="entry name" value="GHMP kinase, C-terminal domain"/>
    <property type="match status" value="1"/>
</dbReference>
<dbReference type="HAMAP" id="MF_00384">
    <property type="entry name" value="Homoser_kinase"/>
    <property type="match status" value="1"/>
</dbReference>
<dbReference type="InterPro" id="IPR013750">
    <property type="entry name" value="GHMP_kinase_C_dom"/>
</dbReference>
<dbReference type="InterPro" id="IPR036554">
    <property type="entry name" value="GHMP_kinase_C_sf"/>
</dbReference>
<dbReference type="InterPro" id="IPR006204">
    <property type="entry name" value="GHMP_kinase_N_dom"/>
</dbReference>
<dbReference type="InterPro" id="IPR006203">
    <property type="entry name" value="GHMP_knse_ATP-bd_CS"/>
</dbReference>
<dbReference type="InterPro" id="IPR000870">
    <property type="entry name" value="Homoserine_kinase"/>
</dbReference>
<dbReference type="InterPro" id="IPR020568">
    <property type="entry name" value="Ribosomal_Su5_D2-typ_SF"/>
</dbReference>
<dbReference type="InterPro" id="IPR014721">
    <property type="entry name" value="Ribsml_uS5_D2-typ_fold_subgr"/>
</dbReference>
<dbReference type="NCBIfam" id="NF002288">
    <property type="entry name" value="PRK01212.1-4"/>
    <property type="match status" value="1"/>
</dbReference>
<dbReference type="NCBIfam" id="TIGR00191">
    <property type="entry name" value="thrB"/>
    <property type="match status" value="1"/>
</dbReference>
<dbReference type="PANTHER" id="PTHR20861:SF1">
    <property type="entry name" value="HOMOSERINE KINASE"/>
    <property type="match status" value="1"/>
</dbReference>
<dbReference type="PANTHER" id="PTHR20861">
    <property type="entry name" value="HOMOSERINE/4-DIPHOSPHOCYTIDYL-2-C-METHYL-D-ERYTHRITOL KINASE"/>
    <property type="match status" value="1"/>
</dbReference>
<dbReference type="Pfam" id="PF08544">
    <property type="entry name" value="GHMP_kinases_C"/>
    <property type="match status" value="1"/>
</dbReference>
<dbReference type="Pfam" id="PF00288">
    <property type="entry name" value="GHMP_kinases_N"/>
    <property type="match status" value="1"/>
</dbReference>
<dbReference type="PIRSF" id="PIRSF000676">
    <property type="entry name" value="Homoser_kin"/>
    <property type="match status" value="1"/>
</dbReference>
<dbReference type="PRINTS" id="PR00958">
    <property type="entry name" value="HOMSERKINASE"/>
</dbReference>
<dbReference type="SUPFAM" id="SSF55060">
    <property type="entry name" value="GHMP Kinase, C-terminal domain"/>
    <property type="match status" value="1"/>
</dbReference>
<dbReference type="SUPFAM" id="SSF54211">
    <property type="entry name" value="Ribosomal protein S5 domain 2-like"/>
    <property type="match status" value="1"/>
</dbReference>
<dbReference type="PROSITE" id="PS00627">
    <property type="entry name" value="GHMP_KINASES_ATP"/>
    <property type="match status" value="1"/>
</dbReference>
<organism>
    <name type="scientific">Klebsiella pneumoniae (strain 342)</name>
    <dbReference type="NCBI Taxonomy" id="507522"/>
    <lineage>
        <taxon>Bacteria</taxon>
        <taxon>Pseudomonadati</taxon>
        <taxon>Pseudomonadota</taxon>
        <taxon>Gammaproteobacteria</taxon>
        <taxon>Enterobacterales</taxon>
        <taxon>Enterobacteriaceae</taxon>
        <taxon>Klebsiella/Raoultella group</taxon>
        <taxon>Klebsiella</taxon>
        <taxon>Klebsiella pneumoniae complex</taxon>
    </lineage>
</organism>
<gene>
    <name evidence="1" type="primary">thrB</name>
    <name type="ordered locus">KPK_4754</name>
</gene>
<accession>B5Y254</accession>
<protein>
    <recommendedName>
        <fullName evidence="1">Homoserine kinase</fullName>
        <shortName evidence="1">HK</shortName>
        <shortName evidence="1">HSK</shortName>
        <ecNumber evidence="1">2.7.1.39</ecNumber>
    </recommendedName>
</protein>
<name>KHSE_KLEP3</name>